<sequence>MKFEKLGQSGRARRGRLTLEHGVVETPIFMPVGTYGTVKGMLPRDIEDIQAQIILGNTFHLYLRPGLEVIKQHGGLHDFIKWNKPILTDSGGFQVFSLGAMRKIKEEGVTFRSPIDGSKVFLSPEISMEIQHVLNSDIVMIFDECTPYPATHEEAQKSLQLSLRWAKRCKAHHHDELKNKNALFGIIQGGMYEDLRDESLNGLLEIGFDGYAIGGLSVGEPKEEMIKVLDYLPNKMPHDKPRYLMGVGKPEDIVEAVRRGVDMFDCVMPTRNARNGHYFVTDGLVRIRNSKYRHDQGPLDPHCDCYTCKNFTRAYLFHLEKCGEMLASMLGTIHNLRYYQRLTEGMRDALDKGTFDEFVQDFYARRGLEVPPCPVDE</sequence>
<reference key="1">
    <citation type="journal article" date="2008" name="PLoS ONE">
        <title>Comparative analysis of Acinetobacters: three genomes for three lifestyles.</title>
        <authorList>
            <person name="Vallenet D."/>
            <person name="Nordmann P."/>
            <person name="Barbe V."/>
            <person name="Poirel L."/>
            <person name="Mangenot S."/>
            <person name="Bataille E."/>
            <person name="Dossat C."/>
            <person name="Gas S."/>
            <person name="Kreimeyer A."/>
            <person name="Lenoble P."/>
            <person name="Oztas S."/>
            <person name="Poulain J."/>
            <person name="Segurens B."/>
            <person name="Robert C."/>
            <person name="Abergel C."/>
            <person name="Claverie J.-M."/>
            <person name="Raoult D."/>
            <person name="Medigue C."/>
            <person name="Weissenbach J."/>
            <person name="Cruveiller S."/>
        </authorList>
    </citation>
    <scope>NUCLEOTIDE SEQUENCE [LARGE SCALE GENOMIC DNA]</scope>
    <source>
        <strain>SDF</strain>
    </source>
</reference>
<evidence type="ECO:0000255" key="1">
    <source>
        <dbReference type="HAMAP-Rule" id="MF_00168"/>
    </source>
</evidence>
<comment type="function">
    <text evidence="1">Catalyzes the base-exchange of a guanine (G) residue with the queuine precursor 7-aminomethyl-7-deazaguanine (PreQ1) at position 34 (anticodon wobble position) in tRNAs with GU(N) anticodons (tRNA-Asp, -Asn, -His and -Tyr). Catalysis occurs through a double-displacement mechanism. The nucleophile active site attacks the C1' of nucleotide 34 to detach the guanine base from the RNA, forming a covalent enzyme-RNA intermediate. The proton acceptor active site deprotonates the incoming PreQ1, allowing a nucleophilic attack on the C1' of the ribose to form the product. After dissociation, two additional enzymatic reactions on the tRNA convert PreQ1 to queuine (Q), resulting in the hypermodified nucleoside queuosine (7-(((4,5-cis-dihydroxy-2-cyclopenten-1-yl)amino)methyl)-7-deazaguanosine).</text>
</comment>
<comment type="catalytic activity">
    <reaction evidence="1">
        <text>7-aminomethyl-7-carbaguanine + guanosine(34) in tRNA = 7-aminomethyl-7-carbaguanosine(34) in tRNA + guanine</text>
        <dbReference type="Rhea" id="RHEA:24104"/>
        <dbReference type="Rhea" id="RHEA-COMP:10341"/>
        <dbReference type="Rhea" id="RHEA-COMP:10342"/>
        <dbReference type="ChEBI" id="CHEBI:16235"/>
        <dbReference type="ChEBI" id="CHEBI:58703"/>
        <dbReference type="ChEBI" id="CHEBI:74269"/>
        <dbReference type="ChEBI" id="CHEBI:82833"/>
        <dbReference type="EC" id="2.4.2.29"/>
    </reaction>
</comment>
<comment type="cofactor">
    <cofactor evidence="1">
        <name>Zn(2+)</name>
        <dbReference type="ChEBI" id="CHEBI:29105"/>
    </cofactor>
    <text evidence="1">Binds 1 zinc ion per subunit.</text>
</comment>
<comment type="pathway">
    <text evidence="1">tRNA modification; tRNA-queuosine biosynthesis.</text>
</comment>
<comment type="subunit">
    <text evidence="1">Homodimer. Within each dimer, one monomer is responsible for RNA recognition and catalysis, while the other monomer binds to the replacement base PreQ1.</text>
</comment>
<comment type="similarity">
    <text evidence="1">Belongs to the queuine tRNA-ribosyltransferase family.</text>
</comment>
<proteinExistence type="inferred from homology"/>
<protein>
    <recommendedName>
        <fullName evidence="1">Queuine tRNA-ribosyltransferase</fullName>
        <ecNumber evidence="1">2.4.2.29</ecNumber>
    </recommendedName>
    <alternativeName>
        <fullName evidence="1">Guanine insertion enzyme</fullName>
    </alternativeName>
    <alternativeName>
        <fullName evidence="1">tRNA-guanine transglycosylase</fullName>
    </alternativeName>
</protein>
<organism>
    <name type="scientific">Acinetobacter baumannii (strain SDF)</name>
    <dbReference type="NCBI Taxonomy" id="509170"/>
    <lineage>
        <taxon>Bacteria</taxon>
        <taxon>Pseudomonadati</taxon>
        <taxon>Pseudomonadota</taxon>
        <taxon>Gammaproteobacteria</taxon>
        <taxon>Moraxellales</taxon>
        <taxon>Moraxellaceae</taxon>
        <taxon>Acinetobacter</taxon>
        <taxon>Acinetobacter calcoaceticus/baumannii complex</taxon>
    </lineage>
</organism>
<dbReference type="EC" id="2.4.2.29" evidence="1"/>
<dbReference type="EMBL" id="CU468230">
    <property type="protein sequence ID" value="CAO99902.1"/>
    <property type="molecule type" value="Genomic_DNA"/>
</dbReference>
<dbReference type="SMR" id="B0VRA8"/>
<dbReference type="KEGG" id="abm:ABSDF0518"/>
<dbReference type="HOGENOM" id="CLU_022060_0_1_6"/>
<dbReference type="UniPathway" id="UPA00392"/>
<dbReference type="Proteomes" id="UP000001741">
    <property type="component" value="Chromosome"/>
</dbReference>
<dbReference type="GO" id="GO:0005829">
    <property type="term" value="C:cytosol"/>
    <property type="evidence" value="ECO:0007669"/>
    <property type="project" value="TreeGrafter"/>
</dbReference>
<dbReference type="GO" id="GO:0046872">
    <property type="term" value="F:metal ion binding"/>
    <property type="evidence" value="ECO:0007669"/>
    <property type="project" value="UniProtKB-KW"/>
</dbReference>
<dbReference type="GO" id="GO:0008479">
    <property type="term" value="F:tRNA-guanosine(34) queuine transglycosylase activity"/>
    <property type="evidence" value="ECO:0007669"/>
    <property type="project" value="UniProtKB-UniRule"/>
</dbReference>
<dbReference type="GO" id="GO:0008616">
    <property type="term" value="P:queuosine biosynthetic process"/>
    <property type="evidence" value="ECO:0007669"/>
    <property type="project" value="UniProtKB-UniRule"/>
</dbReference>
<dbReference type="GO" id="GO:0002099">
    <property type="term" value="P:tRNA wobble guanine modification"/>
    <property type="evidence" value="ECO:0007669"/>
    <property type="project" value="TreeGrafter"/>
</dbReference>
<dbReference type="GO" id="GO:0101030">
    <property type="term" value="P:tRNA-guanine transglycosylation"/>
    <property type="evidence" value="ECO:0007669"/>
    <property type="project" value="InterPro"/>
</dbReference>
<dbReference type="FunFam" id="3.20.20.105:FF:000001">
    <property type="entry name" value="Queuine tRNA-ribosyltransferase"/>
    <property type="match status" value="1"/>
</dbReference>
<dbReference type="Gene3D" id="3.20.20.105">
    <property type="entry name" value="Queuine tRNA-ribosyltransferase-like"/>
    <property type="match status" value="1"/>
</dbReference>
<dbReference type="HAMAP" id="MF_00168">
    <property type="entry name" value="Q_tRNA_Tgt"/>
    <property type="match status" value="1"/>
</dbReference>
<dbReference type="InterPro" id="IPR050076">
    <property type="entry name" value="ArchSynthase1/Queuine_TRR"/>
</dbReference>
<dbReference type="InterPro" id="IPR004803">
    <property type="entry name" value="TGT"/>
</dbReference>
<dbReference type="InterPro" id="IPR036511">
    <property type="entry name" value="TGT-like_sf"/>
</dbReference>
<dbReference type="InterPro" id="IPR002616">
    <property type="entry name" value="tRNA_ribo_trans-like"/>
</dbReference>
<dbReference type="NCBIfam" id="TIGR00430">
    <property type="entry name" value="Q_tRNA_tgt"/>
    <property type="match status" value="1"/>
</dbReference>
<dbReference type="NCBIfam" id="TIGR00449">
    <property type="entry name" value="tgt_general"/>
    <property type="match status" value="1"/>
</dbReference>
<dbReference type="PANTHER" id="PTHR46499">
    <property type="entry name" value="QUEUINE TRNA-RIBOSYLTRANSFERASE"/>
    <property type="match status" value="1"/>
</dbReference>
<dbReference type="PANTHER" id="PTHR46499:SF1">
    <property type="entry name" value="QUEUINE TRNA-RIBOSYLTRANSFERASE"/>
    <property type="match status" value="1"/>
</dbReference>
<dbReference type="Pfam" id="PF01702">
    <property type="entry name" value="TGT"/>
    <property type="match status" value="1"/>
</dbReference>
<dbReference type="SUPFAM" id="SSF51713">
    <property type="entry name" value="tRNA-guanine transglycosylase"/>
    <property type="match status" value="1"/>
</dbReference>
<name>TGT_ACIBS</name>
<feature type="chain" id="PRO_1000097523" description="Queuine tRNA-ribosyltransferase">
    <location>
        <begin position="1"/>
        <end position="377"/>
    </location>
</feature>
<feature type="region of interest" description="RNA binding" evidence="1">
    <location>
        <begin position="246"/>
        <end position="252"/>
    </location>
</feature>
<feature type="region of interest" description="RNA binding; important for wobble base 34 recognition" evidence="1">
    <location>
        <begin position="270"/>
        <end position="274"/>
    </location>
</feature>
<feature type="active site" description="Proton acceptor" evidence="1">
    <location>
        <position position="89"/>
    </location>
</feature>
<feature type="active site" description="Nucleophile" evidence="1">
    <location>
        <position position="265"/>
    </location>
</feature>
<feature type="binding site" evidence="1">
    <location>
        <begin position="89"/>
        <end position="93"/>
    </location>
    <ligand>
        <name>substrate</name>
    </ligand>
</feature>
<feature type="binding site" evidence="1">
    <location>
        <position position="143"/>
    </location>
    <ligand>
        <name>substrate</name>
    </ligand>
</feature>
<feature type="binding site" evidence="1">
    <location>
        <position position="188"/>
    </location>
    <ligand>
        <name>substrate</name>
    </ligand>
</feature>
<feature type="binding site" evidence="1">
    <location>
        <position position="215"/>
    </location>
    <ligand>
        <name>substrate</name>
    </ligand>
</feature>
<feature type="binding site" evidence="1">
    <location>
        <position position="303"/>
    </location>
    <ligand>
        <name>Zn(2+)</name>
        <dbReference type="ChEBI" id="CHEBI:29105"/>
    </ligand>
</feature>
<feature type="binding site" evidence="1">
    <location>
        <position position="305"/>
    </location>
    <ligand>
        <name>Zn(2+)</name>
        <dbReference type="ChEBI" id="CHEBI:29105"/>
    </ligand>
</feature>
<feature type="binding site" evidence="1">
    <location>
        <position position="308"/>
    </location>
    <ligand>
        <name>Zn(2+)</name>
        <dbReference type="ChEBI" id="CHEBI:29105"/>
    </ligand>
</feature>
<feature type="binding site" evidence="1">
    <location>
        <position position="334"/>
    </location>
    <ligand>
        <name>Zn(2+)</name>
        <dbReference type="ChEBI" id="CHEBI:29105"/>
    </ligand>
</feature>
<gene>
    <name evidence="1" type="primary">tgt</name>
    <name type="ordered locus">ABSDF0518</name>
</gene>
<keyword id="KW-0328">Glycosyltransferase</keyword>
<keyword id="KW-0479">Metal-binding</keyword>
<keyword id="KW-0671">Queuosine biosynthesis</keyword>
<keyword id="KW-0808">Transferase</keyword>
<keyword id="KW-0819">tRNA processing</keyword>
<keyword id="KW-0862">Zinc</keyword>
<accession>B0VRA8</accession>